<accession>Q2N927</accession>
<proteinExistence type="inferred from homology"/>
<dbReference type="EMBL" id="CP000157">
    <property type="protein sequence ID" value="ABC63814.1"/>
    <property type="molecule type" value="Genomic_DNA"/>
</dbReference>
<dbReference type="RefSeq" id="WP_011414644.1">
    <property type="nucleotide sequence ID" value="NC_007722.1"/>
</dbReference>
<dbReference type="SMR" id="Q2N927"/>
<dbReference type="STRING" id="314225.ELI_08610"/>
<dbReference type="KEGG" id="eli:ELI_08610"/>
<dbReference type="eggNOG" id="COG0776">
    <property type="taxonomic scope" value="Bacteria"/>
</dbReference>
<dbReference type="HOGENOM" id="CLU_105066_1_1_5"/>
<dbReference type="Proteomes" id="UP000008808">
    <property type="component" value="Chromosome"/>
</dbReference>
<dbReference type="GO" id="GO:0005829">
    <property type="term" value="C:cytosol"/>
    <property type="evidence" value="ECO:0007669"/>
    <property type="project" value="TreeGrafter"/>
</dbReference>
<dbReference type="GO" id="GO:0003677">
    <property type="term" value="F:DNA binding"/>
    <property type="evidence" value="ECO:0007669"/>
    <property type="project" value="UniProtKB-UniRule"/>
</dbReference>
<dbReference type="GO" id="GO:0030527">
    <property type="term" value="F:structural constituent of chromatin"/>
    <property type="evidence" value="ECO:0007669"/>
    <property type="project" value="InterPro"/>
</dbReference>
<dbReference type="GO" id="GO:0006310">
    <property type="term" value="P:DNA recombination"/>
    <property type="evidence" value="ECO:0007669"/>
    <property type="project" value="UniProtKB-UniRule"/>
</dbReference>
<dbReference type="GO" id="GO:0009893">
    <property type="term" value="P:positive regulation of metabolic process"/>
    <property type="evidence" value="ECO:0007669"/>
    <property type="project" value="UniProtKB-ARBA"/>
</dbReference>
<dbReference type="GO" id="GO:0006355">
    <property type="term" value="P:regulation of DNA-templated transcription"/>
    <property type="evidence" value="ECO:0007669"/>
    <property type="project" value="UniProtKB-UniRule"/>
</dbReference>
<dbReference type="GO" id="GO:0006417">
    <property type="term" value="P:regulation of translation"/>
    <property type="evidence" value="ECO:0007669"/>
    <property type="project" value="UniProtKB-UniRule"/>
</dbReference>
<dbReference type="CDD" id="cd13835">
    <property type="entry name" value="IHF_A"/>
    <property type="match status" value="1"/>
</dbReference>
<dbReference type="Gene3D" id="4.10.520.10">
    <property type="entry name" value="IHF-like DNA-binding proteins"/>
    <property type="match status" value="1"/>
</dbReference>
<dbReference type="HAMAP" id="MF_00380">
    <property type="entry name" value="IHF_alpha"/>
    <property type="match status" value="1"/>
</dbReference>
<dbReference type="InterPro" id="IPR000119">
    <property type="entry name" value="Hist_DNA-bd"/>
</dbReference>
<dbReference type="InterPro" id="IPR020816">
    <property type="entry name" value="Histone-like_DNA-bd_CS"/>
</dbReference>
<dbReference type="InterPro" id="IPR010992">
    <property type="entry name" value="IHF-like_DNA-bd_dom_sf"/>
</dbReference>
<dbReference type="InterPro" id="IPR005684">
    <property type="entry name" value="IHF_alpha"/>
</dbReference>
<dbReference type="NCBIfam" id="TIGR00987">
    <property type="entry name" value="himA"/>
    <property type="match status" value="1"/>
</dbReference>
<dbReference type="NCBIfam" id="NF001401">
    <property type="entry name" value="PRK00285.1"/>
    <property type="match status" value="1"/>
</dbReference>
<dbReference type="PANTHER" id="PTHR33175">
    <property type="entry name" value="DNA-BINDING PROTEIN HU"/>
    <property type="match status" value="1"/>
</dbReference>
<dbReference type="PANTHER" id="PTHR33175:SF2">
    <property type="entry name" value="INTEGRATION HOST FACTOR SUBUNIT ALPHA"/>
    <property type="match status" value="1"/>
</dbReference>
<dbReference type="Pfam" id="PF00216">
    <property type="entry name" value="Bac_DNA_binding"/>
    <property type="match status" value="1"/>
</dbReference>
<dbReference type="PRINTS" id="PR01727">
    <property type="entry name" value="DNABINDINGHU"/>
</dbReference>
<dbReference type="SMART" id="SM00411">
    <property type="entry name" value="BHL"/>
    <property type="match status" value="1"/>
</dbReference>
<dbReference type="SUPFAM" id="SSF47729">
    <property type="entry name" value="IHF-like DNA-binding proteins"/>
    <property type="match status" value="1"/>
</dbReference>
<dbReference type="PROSITE" id="PS00045">
    <property type="entry name" value="HISTONE_LIKE"/>
    <property type="match status" value="1"/>
</dbReference>
<gene>
    <name evidence="1" type="primary">ihfA</name>
    <name evidence="1" type="synonym">himA</name>
    <name type="ordered locus">ELI_08610</name>
</gene>
<organism>
    <name type="scientific">Erythrobacter litoralis (strain HTCC2594)</name>
    <dbReference type="NCBI Taxonomy" id="314225"/>
    <lineage>
        <taxon>Bacteria</taxon>
        <taxon>Pseudomonadati</taxon>
        <taxon>Pseudomonadota</taxon>
        <taxon>Alphaproteobacteria</taxon>
        <taxon>Sphingomonadales</taxon>
        <taxon>Erythrobacteraceae</taxon>
        <taxon>Erythrobacter/Porphyrobacter group</taxon>
        <taxon>Erythrobacter</taxon>
    </lineage>
</organism>
<sequence length="100" mass="11103">MSRSVGTLTRADLAEAINRKMGFSRAESLDMVEAILEHMCGALRKGENVKISGFGSFVLRDKKERIGRNPKTGVEVPITPRRVMTFRASQLLRERIAKGG</sequence>
<feature type="chain" id="PRO_0000277729" description="Integration host factor subunit alpha">
    <location>
        <begin position="1"/>
        <end position="100"/>
    </location>
</feature>
<name>IHFA_ERYLH</name>
<keyword id="KW-0233">DNA recombination</keyword>
<keyword id="KW-0238">DNA-binding</keyword>
<keyword id="KW-1185">Reference proteome</keyword>
<keyword id="KW-0804">Transcription</keyword>
<keyword id="KW-0805">Transcription regulation</keyword>
<keyword id="KW-0810">Translation regulation</keyword>
<protein>
    <recommendedName>
        <fullName evidence="1">Integration host factor subunit alpha</fullName>
        <shortName evidence="1">IHF-alpha</shortName>
    </recommendedName>
</protein>
<evidence type="ECO:0000255" key="1">
    <source>
        <dbReference type="HAMAP-Rule" id="MF_00380"/>
    </source>
</evidence>
<comment type="function">
    <text evidence="1">This protein is one of the two subunits of integration host factor, a specific DNA-binding protein that functions in genetic recombination as well as in transcriptional and translational control.</text>
</comment>
<comment type="subunit">
    <text evidence="1">Heterodimer of an alpha and a beta chain.</text>
</comment>
<comment type="similarity">
    <text evidence="1">Belongs to the bacterial histone-like protein family.</text>
</comment>
<reference key="1">
    <citation type="journal article" date="2009" name="J. Bacteriol.">
        <title>Complete genome sequence of Erythrobacter litoralis HTCC2594.</title>
        <authorList>
            <person name="Oh H.M."/>
            <person name="Giovannoni S.J."/>
            <person name="Ferriera S."/>
            <person name="Johnson J."/>
            <person name="Cho J.C."/>
        </authorList>
    </citation>
    <scope>NUCLEOTIDE SEQUENCE [LARGE SCALE GENOMIC DNA]</scope>
    <source>
        <strain>HTCC2594</strain>
    </source>
</reference>